<keyword id="KW-0687">Ribonucleoprotein</keyword>
<keyword id="KW-0689">Ribosomal protein</keyword>
<gene>
    <name evidence="1" type="primary">rpsJ</name>
    <name type="ordered locus">CFF8240_0033</name>
</gene>
<comment type="function">
    <text evidence="1">Involved in the binding of tRNA to the ribosomes.</text>
</comment>
<comment type="subunit">
    <text evidence="1">Part of the 30S ribosomal subunit.</text>
</comment>
<comment type="similarity">
    <text evidence="1">Belongs to the universal ribosomal protein uS10 family.</text>
</comment>
<evidence type="ECO:0000255" key="1">
    <source>
        <dbReference type="HAMAP-Rule" id="MF_00508"/>
    </source>
</evidence>
<evidence type="ECO:0000305" key="2"/>
<proteinExistence type="inferred from homology"/>
<reference key="1">
    <citation type="submission" date="2006-11" db="EMBL/GenBank/DDBJ databases">
        <title>Sequence of Campylobacter fetus subsp. fetus 82-40.</title>
        <authorList>
            <person name="Fouts D.E."/>
            <person name="Nelson K.E."/>
        </authorList>
    </citation>
    <scope>NUCLEOTIDE SEQUENCE [LARGE SCALE GENOMIC DNA]</scope>
    <source>
        <strain>82-40</strain>
    </source>
</reference>
<organism>
    <name type="scientific">Campylobacter fetus subsp. fetus (strain 82-40)</name>
    <dbReference type="NCBI Taxonomy" id="360106"/>
    <lineage>
        <taxon>Bacteria</taxon>
        <taxon>Pseudomonadati</taxon>
        <taxon>Campylobacterota</taxon>
        <taxon>Epsilonproteobacteria</taxon>
        <taxon>Campylobacterales</taxon>
        <taxon>Campylobacteraceae</taxon>
        <taxon>Campylobacter</taxon>
    </lineage>
</organism>
<feature type="chain" id="PRO_1000015004" description="Small ribosomal subunit protein uS10">
    <location>
        <begin position="1"/>
        <end position="103"/>
    </location>
</feature>
<accession>A0RM10</accession>
<protein>
    <recommendedName>
        <fullName evidence="1">Small ribosomal subunit protein uS10</fullName>
    </recommendedName>
    <alternativeName>
        <fullName evidence="2">30S ribosomal protein S10</fullName>
    </alternativeName>
</protein>
<sequence>MERIRLKLKAYDHRVLDRTVAAIVEAVKRTGADVRGPVPMPTKIKRYTVLKSPHVNKDSREQFEMRIHARMLDIVAATPDTVDSLTKLDLAPEVNVEVRAMGK</sequence>
<name>RS10_CAMFF</name>
<dbReference type="EMBL" id="CP000487">
    <property type="protein sequence ID" value="ABK82777.1"/>
    <property type="molecule type" value="Genomic_DNA"/>
</dbReference>
<dbReference type="RefSeq" id="WP_002847957.1">
    <property type="nucleotide sequence ID" value="NC_008599.1"/>
</dbReference>
<dbReference type="SMR" id="A0RM10"/>
<dbReference type="GeneID" id="93112488"/>
<dbReference type="KEGG" id="cff:CFF8240_0033"/>
<dbReference type="eggNOG" id="COG0051">
    <property type="taxonomic scope" value="Bacteria"/>
</dbReference>
<dbReference type="HOGENOM" id="CLU_122625_1_2_7"/>
<dbReference type="Proteomes" id="UP000000760">
    <property type="component" value="Chromosome"/>
</dbReference>
<dbReference type="GO" id="GO:1990904">
    <property type="term" value="C:ribonucleoprotein complex"/>
    <property type="evidence" value="ECO:0007669"/>
    <property type="project" value="UniProtKB-KW"/>
</dbReference>
<dbReference type="GO" id="GO:0005840">
    <property type="term" value="C:ribosome"/>
    <property type="evidence" value="ECO:0007669"/>
    <property type="project" value="UniProtKB-KW"/>
</dbReference>
<dbReference type="GO" id="GO:0003735">
    <property type="term" value="F:structural constituent of ribosome"/>
    <property type="evidence" value="ECO:0007669"/>
    <property type="project" value="InterPro"/>
</dbReference>
<dbReference type="GO" id="GO:0000049">
    <property type="term" value="F:tRNA binding"/>
    <property type="evidence" value="ECO:0007669"/>
    <property type="project" value="UniProtKB-UniRule"/>
</dbReference>
<dbReference type="GO" id="GO:0006412">
    <property type="term" value="P:translation"/>
    <property type="evidence" value="ECO:0007669"/>
    <property type="project" value="UniProtKB-UniRule"/>
</dbReference>
<dbReference type="FunFam" id="3.30.70.600:FF:000003">
    <property type="entry name" value="30S ribosomal protein S10"/>
    <property type="match status" value="1"/>
</dbReference>
<dbReference type="Gene3D" id="3.30.70.600">
    <property type="entry name" value="Ribosomal protein S10 domain"/>
    <property type="match status" value="1"/>
</dbReference>
<dbReference type="HAMAP" id="MF_00508">
    <property type="entry name" value="Ribosomal_uS10"/>
    <property type="match status" value="1"/>
</dbReference>
<dbReference type="InterPro" id="IPR001848">
    <property type="entry name" value="Ribosomal_uS10"/>
</dbReference>
<dbReference type="InterPro" id="IPR018268">
    <property type="entry name" value="Ribosomal_uS10_CS"/>
</dbReference>
<dbReference type="InterPro" id="IPR027486">
    <property type="entry name" value="Ribosomal_uS10_dom"/>
</dbReference>
<dbReference type="InterPro" id="IPR036838">
    <property type="entry name" value="Ribosomal_uS10_dom_sf"/>
</dbReference>
<dbReference type="NCBIfam" id="NF001861">
    <property type="entry name" value="PRK00596.1"/>
    <property type="match status" value="1"/>
</dbReference>
<dbReference type="NCBIfam" id="TIGR01049">
    <property type="entry name" value="rpsJ_bact"/>
    <property type="match status" value="1"/>
</dbReference>
<dbReference type="PANTHER" id="PTHR11700">
    <property type="entry name" value="30S RIBOSOMAL PROTEIN S10 FAMILY MEMBER"/>
    <property type="match status" value="1"/>
</dbReference>
<dbReference type="Pfam" id="PF00338">
    <property type="entry name" value="Ribosomal_S10"/>
    <property type="match status" value="1"/>
</dbReference>
<dbReference type="PRINTS" id="PR00971">
    <property type="entry name" value="RIBOSOMALS10"/>
</dbReference>
<dbReference type="SMART" id="SM01403">
    <property type="entry name" value="Ribosomal_S10"/>
    <property type="match status" value="1"/>
</dbReference>
<dbReference type="SUPFAM" id="SSF54999">
    <property type="entry name" value="Ribosomal protein S10"/>
    <property type="match status" value="1"/>
</dbReference>
<dbReference type="PROSITE" id="PS00361">
    <property type="entry name" value="RIBOSOMAL_S10"/>
    <property type="match status" value="1"/>
</dbReference>